<dbReference type="EC" id="2.5.1.19" evidence="1"/>
<dbReference type="EMBL" id="CP001131">
    <property type="protein sequence ID" value="ACG71438.1"/>
    <property type="molecule type" value="Genomic_DNA"/>
</dbReference>
<dbReference type="RefSeq" id="WP_012524274.1">
    <property type="nucleotide sequence ID" value="NC_011145.1"/>
</dbReference>
<dbReference type="SMR" id="B4ULJ1"/>
<dbReference type="KEGG" id="ank:AnaeK_0195"/>
<dbReference type="HOGENOM" id="CLU_024321_0_1_7"/>
<dbReference type="OrthoDB" id="9809920at2"/>
<dbReference type="UniPathway" id="UPA00053">
    <property type="reaction ID" value="UER00089"/>
</dbReference>
<dbReference type="Proteomes" id="UP000001871">
    <property type="component" value="Chromosome"/>
</dbReference>
<dbReference type="GO" id="GO:0005737">
    <property type="term" value="C:cytoplasm"/>
    <property type="evidence" value="ECO:0007669"/>
    <property type="project" value="UniProtKB-SubCell"/>
</dbReference>
<dbReference type="GO" id="GO:0003866">
    <property type="term" value="F:3-phosphoshikimate 1-carboxyvinyltransferase activity"/>
    <property type="evidence" value="ECO:0007669"/>
    <property type="project" value="UniProtKB-UniRule"/>
</dbReference>
<dbReference type="GO" id="GO:0008652">
    <property type="term" value="P:amino acid biosynthetic process"/>
    <property type="evidence" value="ECO:0007669"/>
    <property type="project" value="UniProtKB-KW"/>
</dbReference>
<dbReference type="GO" id="GO:0009073">
    <property type="term" value="P:aromatic amino acid family biosynthetic process"/>
    <property type="evidence" value="ECO:0007669"/>
    <property type="project" value="UniProtKB-KW"/>
</dbReference>
<dbReference type="GO" id="GO:0009423">
    <property type="term" value="P:chorismate biosynthetic process"/>
    <property type="evidence" value="ECO:0007669"/>
    <property type="project" value="UniProtKB-UniRule"/>
</dbReference>
<dbReference type="CDD" id="cd01556">
    <property type="entry name" value="EPSP_synthase"/>
    <property type="match status" value="1"/>
</dbReference>
<dbReference type="FunFam" id="3.65.10.10:FF:000005">
    <property type="entry name" value="3-phosphoshikimate 1-carboxyvinyltransferase"/>
    <property type="match status" value="1"/>
</dbReference>
<dbReference type="Gene3D" id="3.65.10.10">
    <property type="entry name" value="Enolpyruvate transferase domain"/>
    <property type="match status" value="2"/>
</dbReference>
<dbReference type="HAMAP" id="MF_00210">
    <property type="entry name" value="EPSP_synth"/>
    <property type="match status" value="1"/>
</dbReference>
<dbReference type="InterPro" id="IPR001986">
    <property type="entry name" value="Enolpyruvate_Tfrase_dom"/>
</dbReference>
<dbReference type="InterPro" id="IPR036968">
    <property type="entry name" value="Enolpyruvate_Tfrase_sf"/>
</dbReference>
<dbReference type="InterPro" id="IPR006264">
    <property type="entry name" value="EPSP_synthase"/>
</dbReference>
<dbReference type="InterPro" id="IPR023193">
    <property type="entry name" value="EPSP_synthase_CS"/>
</dbReference>
<dbReference type="InterPro" id="IPR013792">
    <property type="entry name" value="RNA3'P_cycl/enolpyr_Trfase_a/b"/>
</dbReference>
<dbReference type="NCBIfam" id="TIGR01356">
    <property type="entry name" value="aroA"/>
    <property type="match status" value="1"/>
</dbReference>
<dbReference type="PANTHER" id="PTHR21090">
    <property type="entry name" value="AROM/DEHYDROQUINATE SYNTHASE"/>
    <property type="match status" value="1"/>
</dbReference>
<dbReference type="PANTHER" id="PTHR21090:SF5">
    <property type="entry name" value="PENTAFUNCTIONAL AROM POLYPEPTIDE"/>
    <property type="match status" value="1"/>
</dbReference>
<dbReference type="Pfam" id="PF00275">
    <property type="entry name" value="EPSP_synthase"/>
    <property type="match status" value="1"/>
</dbReference>
<dbReference type="PIRSF" id="PIRSF000505">
    <property type="entry name" value="EPSPS"/>
    <property type="match status" value="1"/>
</dbReference>
<dbReference type="SUPFAM" id="SSF55205">
    <property type="entry name" value="EPT/RTPC-like"/>
    <property type="match status" value="1"/>
</dbReference>
<dbReference type="PROSITE" id="PS00104">
    <property type="entry name" value="EPSP_SYNTHASE_1"/>
    <property type="match status" value="1"/>
</dbReference>
<dbReference type="PROSITE" id="PS00885">
    <property type="entry name" value="EPSP_SYNTHASE_2"/>
    <property type="match status" value="1"/>
</dbReference>
<proteinExistence type="inferred from homology"/>
<gene>
    <name evidence="1" type="primary">aroA</name>
    <name type="ordered locus">AnaeK_0195</name>
</gene>
<reference key="1">
    <citation type="submission" date="2008-08" db="EMBL/GenBank/DDBJ databases">
        <title>Complete sequence of Anaeromyxobacter sp. K.</title>
        <authorList>
            <consortium name="US DOE Joint Genome Institute"/>
            <person name="Lucas S."/>
            <person name="Copeland A."/>
            <person name="Lapidus A."/>
            <person name="Glavina del Rio T."/>
            <person name="Dalin E."/>
            <person name="Tice H."/>
            <person name="Bruce D."/>
            <person name="Goodwin L."/>
            <person name="Pitluck S."/>
            <person name="Saunders E."/>
            <person name="Brettin T."/>
            <person name="Detter J.C."/>
            <person name="Han C."/>
            <person name="Larimer F."/>
            <person name="Land M."/>
            <person name="Hauser L."/>
            <person name="Kyrpides N."/>
            <person name="Ovchinnikiva G."/>
            <person name="Beliaev A."/>
        </authorList>
    </citation>
    <scope>NUCLEOTIDE SEQUENCE [LARGE SCALE GENOMIC DNA]</scope>
    <source>
        <strain>K</strain>
    </source>
</reference>
<evidence type="ECO:0000255" key="1">
    <source>
        <dbReference type="HAMAP-Rule" id="MF_00210"/>
    </source>
</evidence>
<protein>
    <recommendedName>
        <fullName evidence="1">3-phosphoshikimate 1-carboxyvinyltransferase</fullName>
        <ecNumber evidence="1">2.5.1.19</ecNumber>
    </recommendedName>
    <alternativeName>
        <fullName evidence="1">5-enolpyruvylshikimate-3-phosphate synthase</fullName>
        <shortName evidence="1">EPSP synthase</shortName>
        <shortName evidence="1">EPSPS</shortName>
    </alternativeName>
</protein>
<comment type="function">
    <text evidence="1">Catalyzes the transfer of the enolpyruvyl moiety of phosphoenolpyruvate (PEP) to the 5-hydroxyl of shikimate-3-phosphate (S3P) to produce enolpyruvyl shikimate-3-phosphate and inorganic phosphate.</text>
</comment>
<comment type="catalytic activity">
    <reaction evidence="1">
        <text>3-phosphoshikimate + phosphoenolpyruvate = 5-O-(1-carboxyvinyl)-3-phosphoshikimate + phosphate</text>
        <dbReference type="Rhea" id="RHEA:21256"/>
        <dbReference type="ChEBI" id="CHEBI:43474"/>
        <dbReference type="ChEBI" id="CHEBI:57701"/>
        <dbReference type="ChEBI" id="CHEBI:58702"/>
        <dbReference type="ChEBI" id="CHEBI:145989"/>
        <dbReference type="EC" id="2.5.1.19"/>
    </reaction>
    <physiologicalReaction direction="left-to-right" evidence="1">
        <dbReference type="Rhea" id="RHEA:21257"/>
    </physiologicalReaction>
</comment>
<comment type="pathway">
    <text evidence="1">Metabolic intermediate biosynthesis; chorismate biosynthesis; chorismate from D-erythrose 4-phosphate and phosphoenolpyruvate: step 6/7.</text>
</comment>
<comment type="subunit">
    <text evidence="1">Monomer.</text>
</comment>
<comment type="subcellular location">
    <subcellularLocation>
        <location evidence="1">Cytoplasm</location>
    </subcellularLocation>
</comment>
<comment type="similarity">
    <text evidence="1">Belongs to the EPSP synthase family.</text>
</comment>
<name>AROA_ANASK</name>
<sequence length="440" mass="45866">MSAAPTSGPLTCRRAGPLRGAIEVPGDKSISHRSLLFGALSTGETRVTGLLDAEDVHSTRRAVEALGATVRDEGAEVVVTPPATLREPGDVIDCGNSGTSLRLLTGVLSGVPGLSVLTGDASLRRRPVRRVIDPLRVMGADLSARDGDRLPPVVVRGGPLRGARHLLPVASAQVKSALLLAGLFADGETAVVEPEKSRDHTERMLRGMGVPVRVSGLEVSVSAARPAGGRVDVPGDISSAAFFLCGAAALPGSEVTVRNLGVNETRTGLLDVLRAMGADVRLADLREVAGEPRADVTVRADRLEGTEIRGATIPRLIDELPAVMVMATQARGRTVIRDAKELRVKESDRLAAMGETLARAGARIELFEDGCAIDGPTPLRGVEVRTRLDHRIAMAMAVAQLFCGGEPVVLDDVACVATSFPGFFRLLDQVSGPASGGGAP</sequence>
<feature type="chain" id="PRO_1000099663" description="3-phosphoshikimate 1-carboxyvinyltransferase">
    <location>
        <begin position="1"/>
        <end position="440"/>
    </location>
</feature>
<feature type="active site" description="Proton acceptor" evidence="1">
    <location>
        <position position="318"/>
    </location>
</feature>
<feature type="binding site" evidence="1">
    <location>
        <position position="28"/>
    </location>
    <ligand>
        <name>3-phosphoshikimate</name>
        <dbReference type="ChEBI" id="CHEBI:145989"/>
    </ligand>
</feature>
<feature type="binding site" evidence="1">
    <location>
        <position position="28"/>
    </location>
    <ligand>
        <name>phosphoenolpyruvate</name>
        <dbReference type="ChEBI" id="CHEBI:58702"/>
    </ligand>
</feature>
<feature type="binding site" evidence="1">
    <location>
        <position position="29"/>
    </location>
    <ligand>
        <name>3-phosphoshikimate</name>
        <dbReference type="ChEBI" id="CHEBI:145989"/>
    </ligand>
</feature>
<feature type="binding site" evidence="1">
    <location>
        <position position="33"/>
    </location>
    <ligand>
        <name>3-phosphoshikimate</name>
        <dbReference type="ChEBI" id="CHEBI:145989"/>
    </ligand>
</feature>
<feature type="binding site" evidence="1">
    <location>
        <position position="98"/>
    </location>
    <ligand>
        <name>phosphoenolpyruvate</name>
        <dbReference type="ChEBI" id="CHEBI:58702"/>
    </ligand>
</feature>
<feature type="binding site" evidence="1">
    <location>
        <position position="126"/>
    </location>
    <ligand>
        <name>phosphoenolpyruvate</name>
        <dbReference type="ChEBI" id="CHEBI:58702"/>
    </ligand>
</feature>
<feature type="binding site" evidence="1">
    <location>
        <position position="171"/>
    </location>
    <ligand>
        <name>3-phosphoshikimate</name>
        <dbReference type="ChEBI" id="CHEBI:145989"/>
    </ligand>
</feature>
<feature type="binding site" evidence="1">
    <location>
        <position position="173"/>
    </location>
    <ligand>
        <name>3-phosphoshikimate</name>
        <dbReference type="ChEBI" id="CHEBI:145989"/>
    </ligand>
</feature>
<feature type="binding site" evidence="1">
    <location>
        <position position="173"/>
    </location>
    <ligand>
        <name>phosphoenolpyruvate</name>
        <dbReference type="ChEBI" id="CHEBI:58702"/>
    </ligand>
</feature>
<feature type="binding site" evidence="1">
    <location>
        <position position="318"/>
    </location>
    <ligand>
        <name>3-phosphoshikimate</name>
        <dbReference type="ChEBI" id="CHEBI:145989"/>
    </ligand>
</feature>
<feature type="binding site" evidence="1">
    <location>
        <position position="345"/>
    </location>
    <ligand>
        <name>3-phosphoshikimate</name>
        <dbReference type="ChEBI" id="CHEBI:145989"/>
    </ligand>
</feature>
<feature type="binding site" evidence="1">
    <location>
        <position position="349"/>
    </location>
    <ligand>
        <name>phosphoenolpyruvate</name>
        <dbReference type="ChEBI" id="CHEBI:58702"/>
    </ligand>
</feature>
<feature type="binding site" evidence="1">
    <location>
        <position position="391"/>
    </location>
    <ligand>
        <name>phosphoenolpyruvate</name>
        <dbReference type="ChEBI" id="CHEBI:58702"/>
    </ligand>
</feature>
<keyword id="KW-0028">Amino-acid biosynthesis</keyword>
<keyword id="KW-0057">Aromatic amino acid biosynthesis</keyword>
<keyword id="KW-0963">Cytoplasm</keyword>
<keyword id="KW-0808">Transferase</keyword>
<organism>
    <name type="scientific">Anaeromyxobacter sp. (strain K)</name>
    <dbReference type="NCBI Taxonomy" id="447217"/>
    <lineage>
        <taxon>Bacteria</taxon>
        <taxon>Pseudomonadati</taxon>
        <taxon>Myxococcota</taxon>
        <taxon>Myxococcia</taxon>
        <taxon>Myxococcales</taxon>
        <taxon>Cystobacterineae</taxon>
        <taxon>Anaeromyxobacteraceae</taxon>
        <taxon>Anaeromyxobacter</taxon>
    </lineage>
</organism>
<accession>B4ULJ1</accession>